<protein>
    <recommendedName>
        <fullName>DnaJ-related protein spj1</fullName>
    </recommendedName>
</protein>
<sequence>MFTNNFSQKQILGVSKDASESEIRKAYRQLTKQWHPDKNPGNEEAQEKFIEINKAHEVLSDPEQRKIYDAYGEEGLNGQPGGPGGGPGEGFPGGGFGFDPFGDIFDNIFGGRRRQNAVRRGPSMEQIVQIHLSSFYTGGSFTLEIPVKRTCSVCSGQGFNPKYSADKAIESCPVCGGSGFRVIEHMIAPGFRQQMRMPCNACNGNGRTIKHKCPRCKGERVAEVVESFDIKVPAGAPEGYRIGFRGKADEIPGMEAGDIIVILEAAGGDYGWTRKDNDLYRKETISVREALLGNWKRKIQKLDGSFMEVKRSAGEVVHPGETERVKNQGMPIYNLHKGKTTSAHGSAYIEWEVKFPKKLKGKFLKDLNNLFEKYDNEFDEL</sequence>
<organism>
    <name type="scientific">Schizosaccharomyces pombe (strain 972 / ATCC 24843)</name>
    <name type="common">Fission yeast</name>
    <dbReference type="NCBI Taxonomy" id="284812"/>
    <lineage>
        <taxon>Eukaryota</taxon>
        <taxon>Fungi</taxon>
        <taxon>Dikarya</taxon>
        <taxon>Ascomycota</taxon>
        <taxon>Taphrinomycotina</taxon>
        <taxon>Schizosaccharomycetes</taxon>
        <taxon>Schizosaccharomycetales</taxon>
        <taxon>Schizosaccharomycetaceae</taxon>
        <taxon>Schizosaccharomyces</taxon>
    </lineage>
</organism>
<name>SPJ1_SCHPO</name>
<reference key="1">
    <citation type="submission" date="1999-07" db="EMBL/GenBank/DDBJ databases">
        <title>S.pombe dnaJ homolog.</title>
        <authorList>
            <person name="Kawamukai M."/>
        </authorList>
    </citation>
    <scope>NUCLEOTIDE SEQUENCE [MRNA]</scope>
</reference>
<reference key="2">
    <citation type="journal article" date="2002" name="Nature">
        <title>The genome sequence of Schizosaccharomyces pombe.</title>
        <authorList>
            <person name="Wood V."/>
            <person name="Gwilliam R."/>
            <person name="Rajandream M.A."/>
            <person name="Lyne M.H."/>
            <person name="Lyne R."/>
            <person name="Stewart A."/>
            <person name="Sgouros J.G."/>
            <person name="Peat N."/>
            <person name="Hayles J."/>
            <person name="Baker S.G."/>
            <person name="Basham D."/>
            <person name="Bowman S."/>
            <person name="Brooks K."/>
            <person name="Brown D."/>
            <person name="Brown S."/>
            <person name="Chillingworth T."/>
            <person name="Churcher C.M."/>
            <person name="Collins M."/>
            <person name="Connor R."/>
            <person name="Cronin A."/>
            <person name="Davis P."/>
            <person name="Feltwell T."/>
            <person name="Fraser A."/>
            <person name="Gentles S."/>
            <person name="Goble A."/>
            <person name="Hamlin N."/>
            <person name="Harris D.E."/>
            <person name="Hidalgo J."/>
            <person name="Hodgson G."/>
            <person name="Holroyd S."/>
            <person name="Hornsby T."/>
            <person name="Howarth S."/>
            <person name="Huckle E.J."/>
            <person name="Hunt S."/>
            <person name="Jagels K."/>
            <person name="James K.D."/>
            <person name="Jones L."/>
            <person name="Jones M."/>
            <person name="Leather S."/>
            <person name="McDonald S."/>
            <person name="McLean J."/>
            <person name="Mooney P."/>
            <person name="Moule S."/>
            <person name="Mungall K.L."/>
            <person name="Murphy L.D."/>
            <person name="Niblett D."/>
            <person name="Odell C."/>
            <person name="Oliver K."/>
            <person name="O'Neil S."/>
            <person name="Pearson D."/>
            <person name="Quail M.A."/>
            <person name="Rabbinowitsch E."/>
            <person name="Rutherford K.M."/>
            <person name="Rutter S."/>
            <person name="Saunders D."/>
            <person name="Seeger K."/>
            <person name="Sharp S."/>
            <person name="Skelton J."/>
            <person name="Simmonds M.N."/>
            <person name="Squares R."/>
            <person name="Squares S."/>
            <person name="Stevens K."/>
            <person name="Taylor K."/>
            <person name="Taylor R.G."/>
            <person name="Tivey A."/>
            <person name="Walsh S.V."/>
            <person name="Warren T."/>
            <person name="Whitehead S."/>
            <person name="Woodward J.R."/>
            <person name="Volckaert G."/>
            <person name="Aert R."/>
            <person name="Robben J."/>
            <person name="Grymonprez B."/>
            <person name="Weltjens I."/>
            <person name="Vanstreels E."/>
            <person name="Rieger M."/>
            <person name="Schaefer M."/>
            <person name="Mueller-Auer S."/>
            <person name="Gabel C."/>
            <person name="Fuchs M."/>
            <person name="Duesterhoeft A."/>
            <person name="Fritzc C."/>
            <person name="Holzer E."/>
            <person name="Moestl D."/>
            <person name="Hilbert H."/>
            <person name="Borzym K."/>
            <person name="Langer I."/>
            <person name="Beck A."/>
            <person name="Lehrach H."/>
            <person name="Reinhardt R."/>
            <person name="Pohl T.M."/>
            <person name="Eger P."/>
            <person name="Zimmermann W."/>
            <person name="Wedler H."/>
            <person name="Wambutt R."/>
            <person name="Purnelle B."/>
            <person name="Goffeau A."/>
            <person name="Cadieu E."/>
            <person name="Dreano S."/>
            <person name="Gloux S."/>
            <person name="Lelaure V."/>
            <person name="Mottier S."/>
            <person name="Galibert F."/>
            <person name="Aves S.J."/>
            <person name="Xiang Z."/>
            <person name="Hunt C."/>
            <person name="Moore K."/>
            <person name="Hurst S.M."/>
            <person name="Lucas M."/>
            <person name="Rochet M."/>
            <person name="Gaillardin C."/>
            <person name="Tallada V.A."/>
            <person name="Garzon A."/>
            <person name="Thode G."/>
            <person name="Daga R.R."/>
            <person name="Cruzado L."/>
            <person name="Jimenez J."/>
            <person name="Sanchez M."/>
            <person name="del Rey F."/>
            <person name="Benito J."/>
            <person name="Dominguez A."/>
            <person name="Revuelta J.L."/>
            <person name="Moreno S."/>
            <person name="Armstrong J."/>
            <person name="Forsburg S.L."/>
            <person name="Cerutti L."/>
            <person name="Lowe T."/>
            <person name="McCombie W.R."/>
            <person name="Paulsen I."/>
            <person name="Potashkin J."/>
            <person name="Shpakovski G.V."/>
            <person name="Ussery D."/>
            <person name="Barrell B.G."/>
            <person name="Nurse P."/>
        </authorList>
    </citation>
    <scope>NUCLEOTIDE SEQUENCE [LARGE SCALE GENOMIC DNA]</scope>
    <source>
        <strain>972 / ATCC 24843</strain>
    </source>
</reference>
<reference key="3">
    <citation type="journal article" date="2011" name="Science">
        <title>Comparative functional genomics of the fission yeasts.</title>
        <authorList>
            <person name="Rhind N."/>
            <person name="Chen Z."/>
            <person name="Yassour M."/>
            <person name="Thompson D.A."/>
            <person name="Haas B.J."/>
            <person name="Habib N."/>
            <person name="Wapinski I."/>
            <person name="Roy S."/>
            <person name="Lin M.F."/>
            <person name="Heiman D.I."/>
            <person name="Young S.K."/>
            <person name="Furuya K."/>
            <person name="Guo Y."/>
            <person name="Pidoux A."/>
            <person name="Chen H.M."/>
            <person name="Robbertse B."/>
            <person name="Goldberg J.M."/>
            <person name="Aoki K."/>
            <person name="Bayne E.H."/>
            <person name="Berlin A.M."/>
            <person name="Desjardins C.A."/>
            <person name="Dobbs E."/>
            <person name="Dukaj L."/>
            <person name="Fan L."/>
            <person name="FitzGerald M.G."/>
            <person name="French C."/>
            <person name="Gujja S."/>
            <person name="Hansen K."/>
            <person name="Keifenheim D."/>
            <person name="Levin J.Z."/>
            <person name="Mosher R.A."/>
            <person name="Mueller C.A."/>
            <person name="Pfiffner J."/>
            <person name="Priest M."/>
            <person name="Russ C."/>
            <person name="Smialowska A."/>
            <person name="Swoboda P."/>
            <person name="Sykes S.M."/>
            <person name="Vaughn M."/>
            <person name="Vengrova S."/>
            <person name="Yoder R."/>
            <person name="Zeng Q."/>
            <person name="Allshire R."/>
            <person name="Baulcombe D."/>
            <person name="Birren B.W."/>
            <person name="Brown W."/>
            <person name="Ekwall K."/>
            <person name="Kellis M."/>
            <person name="Leatherwood J."/>
            <person name="Levin H."/>
            <person name="Margalit H."/>
            <person name="Martienssen R."/>
            <person name="Nieduszynski C.A."/>
            <person name="Spatafora J.W."/>
            <person name="Friedman N."/>
            <person name="Dalgaard J.Z."/>
            <person name="Baumann P."/>
            <person name="Niki H."/>
            <person name="Regev A."/>
            <person name="Nusbaum C."/>
        </authorList>
    </citation>
    <scope>REVISION OF GENE MODEL</scope>
</reference>
<feature type="chain" id="PRO_0000071092" description="DnaJ-related protein spj1">
    <location>
        <begin position="1"/>
        <end position="381"/>
    </location>
</feature>
<feature type="domain" description="J" evidence="2">
    <location>
        <begin position="5"/>
        <end position="74"/>
    </location>
</feature>
<feature type="repeat" description="CXXCXGXG motif">
    <location>
        <begin position="151"/>
        <end position="158"/>
    </location>
</feature>
<feature type="repeat" description="CXXCXGXG motif">
    <location>
        <begin position="172"/>
        <end position="179"/>
    </location>
</feature>
<feature type="repeat" description="CXXCXGXG motif">
    <location>
        <begin position="199"/>
        <end position="206"/>
    </location>
</feature>
<feature type="repeat" description="CXXCXGXG motif">
    <location>
        <begin position="213"/>
        <end position="220"/>
    </location>
</feature>
<feature type="zinc finger region" description="CR-type" evidence="3">
    <location>
        <begin position="138"/>
        <end position="225"/>
    </location>
</feature>
<feature type="region of interest" description="Disordered" evidence="4">
    <location>
        <begin position="72"/>
        <end position="93"/>
    </location>
</feature>
<feature type="short sequence motif" description="Prevents secretion from ER" evidence="1">
    <location>
        <begin position="378"/>
        <end position="381"/>
    </location>
</feature>
<feature type="compositionally biased region" description="Gly residues" evidence="4">
    <location>
        <begin position="78"/>
        <end position="93"/>
    </location>
</feature>
<keyword id="KW-0143">Chaperone</keyword>
<keyword id="KW-0256">Endoplasmic reticulum</keyword>
<keyword id="KW-0479">Metal-binding</keyword>
<keyword id="KW-0653">Protein transport</keyword>
<keyword id="KW-1185">Reference proteome</keyword>
<keyword id="KW-0677">Repeat</keyword>
<keyword id="KW-0813">Transport</keyword>
<keyword id="KW-0862">Zinc</keyword>
<keyword id="KW-0863">Zinc-finger</keyword>
<gene>
    <name type="primary">spj1</name>
    <name type="ORF">SPBC1347.05c</name>
</gene>
<dbReference type="EMBL" id="AB029547">
    <property type="protein sequence ID" value="BAA82347.1"/>
    <property type="molecule type" value="mRNA"/>
</dbReference>
<dbReference type="EMBL" id="CU329671">
    <property type="protein sequence ID" value="CAB37436.3"/>
    <property type="status" value="ALT_SEQ"/>
    <property type="molecule type" value="Genomic_DNA"/>
</dbReference>
<dbReference type="PIR" id="T39393">
    <property type="entry name" value="T39393"/>
</dbReference>
<dbReference type="PIR" id="T43517">
    <property type="entry name" value="T43517"/>
</dbReference>
<dbReference type="SMR" id="O94625"/>
<dbReference type="FunCoup" id="O94625">
    <property type="interactions" value="369"/>
</dbReference>
<dbReference type="STRING" id="284812.O94625"/>
<dbReference type="PaxDb" id="4896-SPBC1347.05c.1"/>
<dbReference type="KEGG" id="spo:2540021"/>
<dbReference type="PomBase" id="SPBC1347.05c"/>
<dbReference type="eggNOG" id="KOG0712">
    <property type="taxonomic scope" value="Eukaryota"/>
</dbReference>
<dbReference type="HOGENOM" id="CLU_017633_0_2_1"/>
<dbReference type="InParanoid" id="O94625"/>
<dbReference type="PhylomeDB" id="O94625"/>
<dbReference type="PRO" id="PR:O94625"/>
<dbReference type="Proteomes" id="UP000002485">
    <property type="component" value="Chromosome II"/>
</dbReference>
<dbReference type="GO" id="GO:0005737">
    <property type="term" value="C:cytoplasm"/>
    <property type="evidence" value="ECO:0000318"/>
    <property type="project" value="GO_Central"/>
</dbReference>
<dbReference type="GO" id="GO:0005788">
    <property type="term" value="C:endoplasmic reticulum lumen"/>
    <property type="evidence" value="ECO:0000266"/>
    <property type="project" value="PomBase"/>
</dbReference>
<dbReference type="GO" id="GO:0030544">
    <property type="term" value="F:Hsp70 protein binding"/>
    <property type="evidence" value="ECO:0000255"/>
    <property type="project" value="PomBase"/>
</dbReference>
<dbReference type="GO" id="GO:0051087">
    <property type="term" value="F:protein-folding chaperone binding"/>
    <property type="evidence" value="ECO:0000318"/>
    <property type="project" value="GO_Central"/>
</dbReference>
<dbReference type="GO" id="GO:0051082">
    <property type="term" value="F:unfolded protein binding"/>
    <property type="evidence" value="ECO:0007669"/>
    <property type="project" value="InterPro"/>
</dbReference>
<dbReference type="GO" id="GO:0008270">
    <property type="term" value="F:zinc ion binding"/>
    <property type="evidence" value="ECO:0007669"/>
    <property type="project" value="UniProtKB-KW"/>
</dbReference>
<dbReference type="GO" id="GO:0034620">
    <property type="term" value="P:cellular response to unfolded protein"/>
    <property type="evidence" value="ECO:0000266"/>
    <property type="project" value="PomBase"/>
</dbReference>
<dbReference type="GO" id="GO:0036503">
    <property type="term" value="P:ERAD pathway"/>
    <property type="evidence" value="ECO:0000266"/>
    <property type="project" value="PomBase"/>
</dbReference>
<dbReference type="GO" id="GO:0034975">
    <property type="term" value="P:protein folding in endoplasmic reticulum"/>
    <property type="evidence" value="ECO:0000266"/>
    <property type="project" value="PomBase"/>
</dbReference>
<dbReference type="GO" id="GO:0042026">
    <property type="term" value="P:protein refolding"/>
    <property type="evidence" value="ECO:0000318"/>
    <property type="project" value="GO_Central"/>
</dbReference>
<dbReference type="GO" id="GO:0015031">
    <property type="term" value="P:protein transport"/>
    <property type="evidence" value="ECO:0007669"/>
    <property type="project" value="UniProtKB-KW"/>
</dbReference>
<dbReference type="CDD" id="cd06257">
    <property type="entry name" value="DnaJ"/>
    <property type="match status" value="1"/>
</dbReference>
<dbReference type="CDD" id="cd10747">
    <property type="entry name" value="DnaJ_C"/>
    <property type="match status" value="1"/>
</dbReference>
<dbReference type="CDD" id="cd10719">
    <property type="entry name" value="DnaJ_zf"/>
    <property type="match status" value="1"/>
</dbReference>
<dbReference type="FunFam" id="2.10.230.10:FF:000001">
    <property type="entry name" value="DnaJ subfamily A member 2"/>
    <property type="match status" value="1"/>
</dbReference>
<dbReference type="FunFam" id="1.10.287.110:FF:000124">
    <property type="entry name" value="SCJ1p protein"/>
    <property type="match status" value="1"/>
</dbReference>
<dbReference type="Gene3D" id="1.10.287.110">
    <property type="entry name" value="DnaJ domain"/>
    <property type="match status" value="1"/>
</dbReference>
<dbReference type="Gene3D" id="2.10.230.10">
    <property type="entry name" value="Heat shock protein DnaJ, cysteine-rich domain"/>
    <property type="match status" value="1"/>
</dbReference>
<dbReference type="Gene3D" id="2.60.260.20">
    <property type="entry name" value="Urease metallochaperone UreE, N-terminal domain"/>
    <property type="match status" value="2"/>
</dbReference>
<dbReference type="InterPro" id="IPR002939">
    <property type="entry name" value="DnaJ_C"/>
</dbReference>
<dbReference type="InterPro" id="IPR001623">
    <property type="entry name" value="DnaJ_domain"/>
</dbReference>
<dbReference type="InterPro" id="IPR018253">
    <property type="entry name" value="DnaJ_domain_CS"/>
</dbReference>
<dbReference type="InterPro" id="IPR044713">
    <property type="entry name" value="DNJA1/2-like"/>
</dbReference>
<dbReference type="InterPro" id="IPR008971">
    <property type="entry name" value="HSP40/DnaJ_pept-bd"/>
</dbReference>
<dbReference type="InterPro" id="IPR001305">
    <property type="entry name" value="HSP_DnaJ_Cys-rich_dom"/>
</dbReference>
<dbReference type="InterPro" id="IPR036410">
    <property type="entry name" value="HSP_DnaJ_Cys-rich_dom_sf"/>
</dbReference>
<dbReference type="InterPro" id="IPR036869">
    <property type="entry name" value="J_dom_sf"/>
</dbReference>
<dbReference type="PANTHER" id="PTHR43888">
    <property type="entry name" value="DNAJ-LIKE-2, ISOFORM A-RELATED"/>
    <property type="match status" value="1"/>
</dbReference>
<dbReference type="Pfam" id="PF00226">
    <property type="entry name" value="DnaJ"/>
    <property type="match status" value="1"/>
</dbReference>
<dbReference type="Pfam" id="PF01556">
    <property type="entry name" value="DnaJ_C"/>
    <property type="match status" value="1"/>
</dbReference>
<dbReference type="Pfam" id="PF00684">
    <property type="entry name" value="DnaJ_CXXCXGXG"/>
    <property type="match status" value="1"/>
</dbReference>
<dbReference type="PRINTS" id="PR00625">
    <property type="entry name" value="JDOMAIN"/>
</dbReference>
<dbReference type="SMART" id="SM00271">
    <property type="entry name" value="DnaJ"/>
    <property type="match status" value="1"/>
</dbReference>
<dbReference type="SUPFAM" id="SSF46565">
    <property type="entry name" value="Chaperone J-domain"/>
    <property type="match status" value="1"/>
</dbReference>
<dbReference type="SUPFAM" id="SSF57938">
    <property type="entry name" value="DnaJ/Hsp40 cysteine-rich domain"/>
    <property type="match status" value="1"/>
</dbReference>
<dbReference type="SUPFAM" id="SSF49493">
    <property type="entry name" value="HSP40/DnaJ peptide-binding domain"/>
    <property type="match status" value="2"/>
</dbReference>
<dbReference type="PROSITE" id="PS00636">
    <property type="entry name" value="DNAJ_1"/>
    <property type="match status" value="1"/>
</dbReference>
<dbReference type="PROSITE" id="PS50076">
    <property type="entry name" value="DNAJ_2"/>
    <property type="match status" value="1"/>
</dbReference>
<dbReference type="PROSITE" id="PS51188">
    <property type="entry name" value="ZF_CR"/>
    <property type="match status" value="1"/>
</dbReference>
<comment type="subcellular location">
    <subcellularLocation>
        <location evidence="5">Endoplasmic reticulum</location>
    </subcellularLocation>
</comment>
<comment type="sequence caution" evidence="5">
    <conflict type="erroneous gene model prediction">
        <sequence resource="EMBL-CDS" id="CAB37436"/>
    </conflict>
</comment>
<proteinExistence type="evidence at transcript level"/>
<accession>O94625</accession>
<accession>Q9Y8G9</accession>
<evidence type="ECO:0000255" key="1"/>
<evidence type="ECO:0000255" key="2">
    <source>
        <dbReference type="PROSITE-ProRule" id="PRU00286"/>
    </source>
</evidence>
<evidence type="ECO:0000255" key="3">
    <source>
        <dbReference type="PROSITE-ProRule" id="PRU00546"/>
    </source>
</evidence>
<evidence type="ECO:0000256" key="4">
    <source>
        <dbReference type="SAM" id="MobiDB-lite"/>
    </source>
</evidence>
<evidence type="ECO:0000305" key="5"/>